<dbReference type="EMBL" id="CP000387">
    <property type="protein sequence ID" value="ABN45102.1"/>
    <property type="molecule type" value="Genomic_DNA"/>
</dbReference>
<dbReference type="RefSeq" id="WP_002909165.1">
    <property type="nucleotide sequence ID" value="NC_009009.1"/>
</dbReference>
<dbReference type="RefSeq" id="YP_001035652.1">
    <property type="nucleotide sequence ID" value="NC_009009.1"/>
</dbReference>
<dbReference type="SMR" id="A3CPJ7"/>
<dbReference type="STRING" id="388919.SSA_1720"/>
<dbReference type="KEGG" id="ssa:SSA_1720"/>
<dbReference type="PATRIC" id="fig|388919.9.peg.1629"/>
<dbReference type="eggNOG" id="COG4467">
    <property type="taxonomic scope" value="Bacteria"/>
</dbReference>
<dbReference type="HOGENOM" id="CLU_157169_0_0_9"/>
<dbReference type="OrthoDB" id="2112130at2"/>
<dbReference type="Proteomes" id="UP000002148">
    <property type="component" value="Chromosome"/>
</dbReference>
<dbReference type="GO" id="GO:0009295">
    <property type="term" value="C:nucleoid"/>
    <property type="evidence" value="ECO:0007669"/>
    <property type="project" value="UniProtKB-SubCell"/>
</dbReference>
<dbReference type="GO" id="GO:0006260">
    <property type="term" value="P:DNA replication"/>
    <property type="evidence" value="ECO:0007669"/>
    <property type="project" value="UniProtKB-UniRule"/>
</dbReference>
<dbReference type="HAMAP" id="MF_01159">
    <property type="entry name" value="YabA"/>
    <property type="match status" value="1"/>
</dbReference>
<dbReference type="InterPro" id="IPR010377">
    <property type="entry name" value="YabA"/>
</dbReference>
<dbReference type="NCBIfam" id="NF009640">
    <property type="entry name" value="PRK13169.1-1"/>
    <property type="match status" value="1"/>
</dbReference>
<dbReference type="Pfam" id="PF06156">
    <property type="entry name" value="YabA"/>
    <property type="match status" value="1"/>
</dbReference>
<dbReference type="PIRSF" id="PIRSF021439">
    <property type="entry name" value="DUF972"/>
    <property type="match status" value="1"/>
</dbReference>
<protein>
    <recommendedName>
        <fullName evidence="1">Replication initiation control protein YabA</fullName>
    </recommendedName>
</protein>
<sequence length="105" mass="12421">MDKKDLFDALDDFSQTLLVTLAEVEAVKKNLKSVVEENIALHLENDKLRERLGEVEKETPTKTKKNRDNLRKLYYDGFHVCTDFYGQRRENDAECMFCDELLFRE</sequence>
<reference key="1">
    <citation type="journal article" date="2007" name="J. Bacteriol.">
        <title>Genome of the opportunistic pathogen Streptococcus sanguinis.</title>
        <authorList>
            <person name="Xu P."/>
            <person name="Alves J.M."/>
            <person name="Kitten T."/>
            <person name="Brown A."/>
            <person name="Chen Z."/>
            <person name="Ozaki L.S."/>
            <person name="Manque P."/>
            <person name="Ge X."/>
            <person name="Serrano M.G."/>
            <person name="Puiu D."/>
            <person name="Hendricks S."/>
            <person name="Wang Y."/>
            <person name="Chaplin M.D."/>
            <person name="Akan D."/>
            <person name="Paik S."/>
            <person name="Peterson D.L."/>
            <person name="Macrina F.L."/>
            <person name="Buck G.A."/>
        </authorList>
    </citation>
    <scope>NUCLEOTIDE SEQUENCE [LARGE SCALE GENOMIC DNA]</scope>
    <source>
        <strain>SK36</strain>
    </source>
</reference>
<comment type="function">
    <text evidence="1">Involved in control of chromosome replication initiation. Inhibits the cooperative binding of DnaA to the oriC region, thus negatively regulating initiation of chromosome replication. Inhibits the ability of DnaA-ATP to form a helix on DNA; does not disassemble preformed DnaA-DNA helices. Decreases the residence time of DnaA on the chromosome at its binding sites (oriC, replication forks and promoter-binding sites). Tethers DnaA to the replication machinery via the DNA polymerase beta sliding clamp subunit (dnaN). Associates with oriC and other DnaA targets on the chromosome in a DnaA-dependent manner.</text>
</comment>
<comment type="cofactor">
    <cofactor evidence="1">
        <name>Zn(2+)</name>
        <dbReference type="ChEBI" id="CHEBI:29105"/>
    </cofactor>
    <text evidence="1">Binds 1 zinc ion per subunit.</text>
</comment>
<comment type="subunit">
    <text evidence="1">Homotetramer. Interacts with both DnaA and DnaN, acting as a bridge between these two proteins.</text>
</comment>
<comment type="subcellular location">
    <subcellularLocation>
        <location evidence="1">Cytoplasm</location>
        <location evidence="1">Nucleoid</location>
    </subcellularLocation>
    <text evidence="1">Localizes in tight foci, which correspond to the replisome at mid-cell throughout the cell cycle.</text>
</comment>
<comment type="similarity">
    <text evidence="1">Belongs to the YabA family.</text>
</comment>
<name>YABA_STRSV</name>
<accession>A3CPJ7</accession>
<organism>
    <name type="scientific">Streptococcus sanguinis (strain SK36)</name>
    <dbReference type="NCBI Taxonomy" id="388919"/>
    <lineage>
        <taxon>Bacteria</taxon>
        <taxon>Bacillati</taxon>
        <taxon>Bacillota</taxon>
        <taxon>Bacilli</taxon>
        <taxon>Lactobacillales</taxon>
        <taxon>Streptococcaceae</taxon>
        <taxon>Streptococcus</taxon>
    </lineage>
</organism>
<keyword id="KW-0963">Cytoplasm</keyword>
<keyword id="KW-0235">DNA replication</keyword>
<keyword id="KW-0236">DNA replication inhibitor</keyword>
<keyword id="KW-0479">Metal-binding</keyword>
<keyword id="KW-1185">Reference proteome</keyword>
<keyword id="KW-0862">Zinc</keyword>
<proteinExistence type="inferred from homology"/>
<evidence type="ECO:0000255" key="1">
    <source>
        <dbReference type="HAMAP-Rule" id="MF_01159"/>
    </source>
</evidence>
<feature type="chain" id="PRO_1000065594" description="Replication initiation control protein YabA">
    <location>
        <begin position="1"/>
        <end position="105"/>
    </location>
</feature>
<feature type="binding site" evidence="1">
    <location>
        <position position="79"/>
    </location>
    <ligand>
        <name>Zn(2+)</name>
        <dbReference type="ChEBI" id="CHEBI:29105"/>
    </ligand>
</feature>
<feature type="binding site" evidence="1">
    <location>
        <position position="81"/>
    </location>
    <ligand>
        <name>Zn(2+)</name>
        <dbReference type="ChEBI" id="CHEBI:29105"/>
    </ligand>
</feature>
<feature type="binding site" evidence="1">
    <location>
        <position position="95"/>
    </location>
    <ligand>
        <name>Zn(2+)</name>
        <dbReference type="ChEBI" id="CHEBI:29105"/>
    </ligand>
</feature>
<feature type="binding site" evidence="1">
    <location>
        <position position="98"/>
    </location>
    <ligand>
        <name>Zn(2+)</name>
        <dbReference type="ChEBI" id="CHEBI:29105"/>
    </ligand>
</feature>
<gene>
    <name evidence="1" type="primary">yabA</name>
    <name type="ordered locus">SSA_1720</name>
</gene>